<keyword id="KW-0012">Acyltransferase</keyword>
<keyword id="KW-0963">Cytoplasm</keyword>
<keyword id="KW-1185">Reference proteome</keyword>
<keyword id="KW-0808">Transferase</keyword>
<reference key="1">
    <citation type="journal article" date="2002" name="DNA Res.">
        <title>Complete genomic sequence of nitrogen-fixing symbiotic bacterium Bradyrhizobium japonicum USDA110.</title>
        <authorList>
            <person name="Kaneko T."/>
            <person name="Nakamura Y."/>
            <person name="Sato S."/>
            <person name="Minamisawa K."/>
            <person name="Uchiumi T."/>
            <person name="Sasamoto S."/>
            <person name="Watanabe A."/>
            <person name="Idesawa K."/>
            <person name="Iriguchi M."/>
            <person name="Kawashima K."/>
            <person name="Kohara M."/>
            <person name="Matsumoto M."/>
            <person name="Shimpo S."/>
            <person name="Tsuruoka H."/>
            <person name="Wada T."/>
            <person name="Yamada M."/>
            <person name="Tabata S."/>
        </authorList>
    </citation>
    <scope>NUCLEOTIDE SEQUENCE [LARGE SCALE GENOMIC DNA]</scope>
    <source>
        <strain>JCM 10833 / BCRC 13528 / IAM 13628 / NBRC 14792 / USDA 110</strain>
    </source>
</reference>
<comment type="function">
    <text evidence="1">Catalyzes the transfer of endogenously produced octanoic acid from octanoyl-acyl-carrier-protein onto the lipoyl domains of lipoate-dependent enzymes. Lipoyl-ACP can also act as a substrate although octanoyl-ACP is likely to be the physiological substrate.</text>
</comment>
<comment type="catalytic activity">
    <reaction evidence="1">
        <text>octanoyl-[ACP] + L-lysyl-[protein] = N(6)-octanoyl-L-lysyl-[protein] + holo-[ACP] + H(+)</text>
        <dbReference type="Rhea" id="RHEA:17665"/>
        <dbReference type="Rhea" id="RHEA-COMP:9636"/>
        <dbReference type="Rhea" id="RHEA-COMP:9685"/>
        <dbReference type="Rhea" id="RHEA-COMP:9752"/>
        <dbReference type="Rhea" id="RHEA-COMP:9928"/>
        <dbReference type="ChEBI" id="CHEBI:15378"/>
        <dbReference type="ChEBI" id="CHEBI:29969"/>
        <dbReference type="ChEBI" id="CHEBI:64479"/>
        <dbReference type="ChEBI" id="CHEBI:78463"/>
        <dbReference type="ChEBI" id="CHEBI:78809"/>
        <dbReference type="EC" id="2.3.1.181"/>
    </reaction>
</comment>
<comment type="pathway">
    <text evidence="1">Protein modification; protein lipoylation via endogenous pathway; protein N(6)-(lipoyl)lysine from octanoyl-[acyl-carrier-protein]: step 1/2.</text>
</comment>
<comment type="subcellular location">
    <subcellularLocation>
        <location evidence="1">Cytoplasm</location>
    </subcellularLocation>
</comment>
<comment type="miscellaneous">
    <text evidence="1">In the reaction, the free carboxyl group of octanoic acid is attached via an amide linkage to the epsilon-amino group of a specific lysine residue of lipoyl domains of lipoate-dependent enzymes.</text>
</comment>
<comment type="similarity">
    <text evidence="1">Belongs to the LipB family.</text>
</comment>
<dbReference type="EC" id="2.3.1.181" evidence="1"/>
<dbReference type="EMBL" id="BA000040">
    <property type="protein sequence ID" value="BAC50522.1"/>
    <property type="molecule type" value="Genomic_DNA"/>
</dbReference>
<dbReference type="RefSeq" id="NP_771897.1">
    <property type="nucleotide sequence ID" value="NC_004463.1"/>
</dbReference>
<dbReference type="RefSeq" id="WP_011088013.1">
    <property type="nucleotide sequence ID" value="NC_004463.1"/>
</dbReference>
<dbReference type="SMR" id="Q89JM6"/>
<dbReference type="FunCoup" id="Q89JM6">
    <property type="interactions" value="435"/>
</dbReference>
<dbReference type="STRING" id="224911.AAV28_23665"/>
<dbReference type="EnsemblBacteria" id="BAC50522">
    <property type="protein sequence ID" value="BAC50522"/>
    <property type="gene ID" value="BAC50522"/>
</dbReference>
<dbReference type="GeneID" id="46492251"/>
<dbReference type="KEGG" id="bja:blr5257"/>
<dbReference type="PATRIC" id="fig|224911.44.peg.5146"/>
<dbReference type="eggNOG" id="COG0321">
    <property type="taxonomic scope" value="Bacteria"/>
</dbReference>
<dbReference type="HOGENOM" id="CLU_035168_3_0_5"/>
<dbReference type="InParanoid" id="Q89JM6"/>
<dbReference type="OrthoDB" id="9787061at2"/>
<dbReference type="PhylomeDB" id="Q89JM6"/>
<dbReference type="UniPathway" id="UPA00538">
    <property type="reaction ID" value="UER00592"/>
</dbReference>
<dbReference type="Proteomes" id="UP000002526">
    <property type="component" value="Chromosome"/>
</dbReference>
<dbReference type="GO" id="GO:0005737">
    <property type="term" value="C:cytoplasm"/>
    <property type="evidence" value="ECO:0007669"/>
    <property type="project" value="UniProtKB-SubCell"/>
</dbReference>
<dbReference type="GO" id="GO:0033819">
    <property type="term" value="F:lipoyl(octanoyl) transferase activity"/>
    <property type="evidence" value="ECO:0000318"/>
    <property type="project" value="GO_Central"/>
</dbReference>
<dbReference type="GO" id="GO:0036211">
    <property type="term" value="P:protein modification process"/>
    <property type="evidence" value="ECO:0007669"/>
    <property type="project" value="InterPro"/>
</dbReference>
<dbReference type="CDD" id="cd16444">
    <property type="entry name" value="LipB"/>
    <property type="match status" value="1"/>
</dbReference>
<dbReference type="FunFam" id="3.30.930.10:FF:000159">
    <property type="entry name" value="Octanoyltransferase"/>
    <property type="match status" value="1"/>
</dbReference>
<dbReference type="Gene3D" id="3.30.930.10">
    <property type="entry name" value="Bira Bifunctional Protein, Domain 2"/>
    <property type="match status" value="1"/>
</dbReference>
<dbReference type="HAMAP" id="MF_00013">
    <property type="entry name" value="LipB"/>
    <property type="match status" value="1"/>
</dbReference>
<dbReference type="InterPro" id="IPR045864">
    <property type="entry name" value="aa-tRNA-synth_II/BPL/LPL"/>
</dbReference>
<dbReference type="InterPro" id="IPR004143">
    <property type="entry name" value="BPL_LPL_catalytic"/>
</dbReference>
<dbReference type="InterPro" id="IPR000544">
    <property type="entry name" value="Octanoyltransferase"/>
</dbReference>
<dbReference type="InterPro" id="IPR020605">
    <property type="entry name" value="Octanoyltransferase_CS"/>
</dbReference>
<dbReference type="NCBIfam" id="TIGR00214">
    <property type="entry name" value="lipB"/>
    <property type="match status" value="1"/>
</dbReference>
<dbReference type="NCBIfam" id="NF010921">
    <property type="entry name" value="PRK14341.1"/>
    <property type="match status" value="1"/>
</dbReference>
<dbReference type="NCBIfam" id="NF010925">
    <property type="entry name" value="PRK14345.1"/>
    <property type="match status" value="1"/>
</dbReference>
<dbReference type="PANTHER" id="PTHR10993:SF7">
    <property type="entry name" value="LIPOYLTRANSFERASE 2, MITOCHONDRIAL-RELATED"/>
    <property type="match status" value="1"/>
</dbReference>
<dbReference type="PANTHER" id="PTHR10993">
    <property type="entry name" value="OCTANOYLTRANSFERASE"/>
    <property type="match status" value="1"/>
</dbReference>
<dbReference type="Pfam" id="PF21948">
    <property type="entry name" value="LplA-B_cat"/>
    <property type="match status" value="1"/>
</dbReference>
<dbReference type="PIRSF" id="PIRSF016262">
    <property type="entry name" value="LPLase"/>
    <property type="match status" value="1"/>
</dbReference>
<dbReference type="SUPFAM" id="SSF55681">
    <property type="entry name" value="Class II aaRS and biotin synthetases"/>
    <property type="match status" value="1"/>
</dbReference>
<dbReference type="PROSITE" id="PS51733">
    <property type="entry name" value="BPL_LPL_CATALYTIC"/>
    <property type="match status" value="1"/>
</dbReference>
<dbReference type="PROSITE" id="PS01313">
    <property type="entry name" value="LIPB"/>
    <property type="match status" value="1"/>
</dbReference>
<name>LIPB_BRADU</name>
<proteinExistence type="inferred from homology"/>
<accession>Q89JM6</accession>
<sequence>MVNSPQNPRQDQRQDLDLTSFSATGGEPVEWRISDAPVPYPEAVAAMEARVAAIAAGEAPELVWLLEHPPLYTSGTSGKDSDLLDPRFPTFATGRGGQLTYHGPGQRVAYIMLDLKRRRPDVRAYVASLEELILKTLAAFNVRGERREDRVGVWVKRPDKGDGYEDKIAAIGVRLKRWVSFHGIAINVEPELSHFAGIVPCGVADPRYGVTSLVDLGQLVTMADVDVALRQAFEELFGPTRALVPEAAA</sequence>
<organism>
    <name type="scientific">Bradyrhizobium diazoefficiens (strain JCM 10833 / BCRC 13528 / IAM 13628 / NBRC 14792 / USDA 110)</name>
    <dbReference type="NCBI Taxonomy" id="224911"/>
    <lineage>
        <taxon>Bacteria</taxon>
        <taxon>Pseudomonadati</taxon>
        <taxon>Pseudomonadota</taxon>
        <taxon>Alphaproteobacteria</taxon>
        <taxon>Hyphomicrobiales</taxon>
        <taxon>Nitrobacteraceae</taxon>
        <taxon>Bradyrhizobium</taxon>
    </lineage>
</organism>
<evidence type="ECO:0000255" key="1">
    <source>
        <dbReference type="HAMAP-Rule" id="MF_00013"/>
    </source>
</evidence>
<evidence type="ECO:0000255" key="2">
    <source>
        <dbReference type="PROSITE-ProRule" id="PRU01067"/>
    </source>
</evidence>
<evidence type="ECO:0000256" key="3">
    <source>
        <dbReference type="SAM" id="MobiDB-lite"/>
    </source>
</evidence>
<gene>
    <name evidence="1" type="primary">lipB</name>
    <name type="ordered locus">blr5257</name>
</gene>
<protein>
    <recommendedName>
        <fullName evidence="1">Octanoyltransferase</fullName>
        <ecNumber evidence="1">2.3.1.181</ecNumber>
    </recommendedName>
    <alternativeName>
        <fullName evidence="1">Lipoate-protein ligase B</fullName>
    </alternativeName>
    <alternativeName>
        <fullName evidence="1">Lipoyl/octanoyl transferase</fullName>
    </alternativeName>
    <alternativeName>
        <fullName evidence="1">Octanoyl-[acyl-carrier-protein]-protein N-octanoyltransferase</fullName>
    </alternativeName>
</protein>
<feature type="chain" id="PRO_0000062817" description="Octanoyltransferase">
    <location>
        <begin position="1"/>
        <end position="249"/>
    </location>
</feature>
<feature type="domain" description="BPL/LPL catalytic" evidence="2">
    <location>
        <begin position="57"/>
        <end position="241"/>
    </location>
</feature>
<feature type="region of interest" description="Disordered" evidence="3">
    <location>
        <begin position="1"/>
        <end position="23"/>
    </location>
</feature>
<feature type="active site" description="Acyl-thioester intermediate" evidence="1">
    <location>
        <position position="201"/>
    </location>
</feature>
<feature type="binding site" evidence="1">
    <location>
        <begin position="95"/>
        <end position="102"/>
    </location>
    <ligand>
        <name>substrate</name>
    </ligand>
</feature>
<feature type="binding site" evidence="1">
    <location>
        <begin position="170"/>
        <end position="172"/>
    </location>
    <ligand>
        <name>substrate</name>
    </ligand>
</feature>
<feature type="binding site" evidence="1">
    <location>
        <begin position="183"/>
        <end position="185"/>
    </location>
    <ligand>
        <name>substrate</name>
    </ligand>
</feature>
<feature type="site" description="Lowers pKa of active site Cys" evidence="1">
    <location>
        <position position="167"/>
    </location>
</feature>